<evidence type="ECO:0000255" key="1">
    <source>
        <dbReference type="HAMAP-Rule" id="MF_01040"/>
    </source>
</evidence>
<accession>P0A7A4</accession>
<accession>P36942</accession>
<gene>
    <name evidence="1" type="primary">gpmB</name>
    <name type="ordered locus">SF4427</name>
    <name type="ordered locus">S4698</name>
</gene>
<sequence length="215" mass="24065">MLQVYLVRHGETQWNAERRIQGQSDSPLTAKGEQQAMQVATRAKELGITHIISSDLGRTRRTAEIIAQACGCDIIFDSRLRELNMGVLEKRHIDSLTEEEENWRRQLVNGTVDGRIPEGESMQELSDRVNAALESCRDLPQGSRPLLVSHGIALGCLVSTILGLPAWAERRLRLRNCSISRVDYQESLWLASGWVVETAGDISHLDAPALDELQR</sequence>
<protein>
    <recommendedName>
        <fullName evidence="1">Probable phosphoglycerate mutase GpmB</fullName>
        <ecNumber evidence="1">5.4.2.-</ecNumber>
    </recommendedName>
    <alternativeName>
        <fullName evidence="1">PGAM</fullName>
    </alternativeName>
    <alternativeName>
        <fullName evidence="1">Phosphoglyceromutase</fullName>
    </alternativeName>
</protein>
<dbReference type="EC" id="5.4.2.-" evidence="1"/>
<dbReference type="EMBL" id="AE005674">
    <property type="protein sequence ID" value="AAN45840.1"/>
    <property type="molecule type" value="Genomic_DNA"/>
</dbReference>
<dbReference type="EMBL" id="AE014073">
    <property type="protein sequence ID" value="AAP19614.1"/>
    <property type="molecule type" value="Genomic_DNA"/>
</dbReference>
<dbReference type="RefSeq" id="NP_710133.1">
    <property type="nucleotide sequence ID" value="NC_004337.2"/>
</dbReference>
<dbReference type="RefSeq" id="WP_000942344.1">
    <property type="nucleotide sequence ID" value="NZ_WPGW01000013.1"/>
</dbReference>
<dbReference type="SMR" id="P0A7A4"/>
<dbReference type="STRING" id="198214.SF4427"/>
<dbReference type="PaxDb" id="198214-SF4427"/>
<dbReference type="GeneID" id="1027579"/>
<dbReference type="GeneID" id="93777450"/>
<dbReference type="KEGG" id="sfl:SF4427"/>
<dbReference type="KEGG" id="sfx:S4698"/>
<dbReference type="PATRIC" id="fig|198214.7.peg.5218"/>
<dbReference type="HOGENOM" id="CLU_033323_9_5_6"/>
<dbReference type="UniPathway" id="UPA00109">
    <property type="reaction ID" value="UER00186"/>
</dbReference>
<dbReference type="Proteomes" id="UP000001006">
    <property type="component" value="Chromosome"/>
</dbReference>
<dbReference type="Proteomes" id="UP000002673">
    <property type="component" value="Chromosome"/>
</dbReference>
<dbReference type="GO" id="GO:0005737">
    <property type="term" value="C:cytoplasm"/>
    <property type="evidence" value="ECO:0007669"/>
    <property type="project" value="TreeGrafter"/>
</dbReference>
<dbReference type="GO" id="GO:0016791">
    <property type="term" value="F:phosphatase activity"/>
    <property type="evidence" value="ECO:0007669"/>
    <property type="project" value="TreeGrafter"/>
</dbReference>
<dbReference type="GO" id="GO:0004619">
    <property type="term" value="F:phosphoglycerate mutase activity"/>
    <property type="evidence" value="ECO:0007669"/>
    <property type="project" value="UniProtKB-UniRule"/>
</dbReference>
<dbReference type="GO" id="GO:0006096">
    <property type="term" value="P:glycolytic process"/>
    <property type="evidence" value="ECO:0007669"/>
    <property type="project" value="UniProtKB-UniRule"/>
</dbReference>
<dbReference type="CDD" id="cd07067">
    <property type="entry name" value="HP_PGM_like"/>
    <property type="match status" value="1"/>
</dbReference>
<dbReference type="Gene3D" id="3.40.50.1240">
    <property type="entry name" value="Phosphoglycerate mutase-like"/>
    <property type="match status" value="1"/>
</dbReference>
<dbReference type="HAMAP" id="MF_01040">
    <property type="entry name" value="PGAM_GpmB"/>
    <property type="match status" value="1"/>
</dbReference>
<dbReference type="InterPro" id="IPR013078">
    <property type="entry name" value="His_Pase_superF_clade-1"/>
</dbReference>
<dbReference type="InterPro" id="IPR029033">
    <property type="entry name" value="His_PPase_superfam"/>
</dbReference>
<dbReference type="InterPro" id="IPR001345">
    <property type="entry name" value="PG/BPGM_mutase_AS"/>
</dbReference>
<dbReference type="InterPro" id="IPR050275">
    <property type="entry name" value="PGM_Phosphatase"/>
</dbReference>
<dbReference type="InterPro" id="IPR023086">
    <property type="entry name" value="Phosphoglycerate_mutase_GpmB"/>
</dbReference>
<dbReference type="NCBIfam" id="NF002901">
    <property type="entry name" value="PRK03482.1"/>
    <property type="match status" value="1"/>
</dbReference>
<dbReference type="PANTHER" id="PTHR48100">
    <property type="entry name" value="BROAD-SPECIFICITY PHOSPHATASE YOR283W-RELATED"/>
    <property type="match status" value="1"/>
</dbReference>
<dbReference type="PANTHER" id="PTHR48100:SF1">
    <property type="entry name" value="HISTIDINE PHOSPHATASE FAMILY PROTEIN-RELATED"/>
    <property type="match status" value="1"/>
</dbReference>
<dbReference type="Pfam" id="PF00300">
    <property type="entry name" value="His_Phos_1"/>
    <property type="match status" value="1"/>
</dbReference>
<dbReference type="SMART" id="SM00855">
    <property type="entry name" value="PGAM"/>
    <property type="match status" value="1"/>
</dbReference>
<dbReference type="SUPFAM" id="SSF53254">
    <property type="entry name" value="Phosphoglycerate mutase-like"/>
    <property type="match status" value="1"/>
</dbReference>
<dbReference type="PROSITE" id="PS00175">
    <property type="entry name" value="PG_MUTASE"/>
    <property type="match status" value="1"/>
</dbReference>
<feature type="chain" id="PRO_0000179952" description="Probable phosphoglycerate mutase GpmB">
    <location>
        <begin position="1"/>
        <end position="215"/>
    </location>
</feature>
<feature type="active site" description="Tele-phosphohistidine intermediate" evidence="1">
    <location>
        <position position="9"/>
    </location>
</feature>
<feature type="active site" description="Proton donor/acceptor" evidence="1">
    <location>
        <position position="82"/>
    </location>
</feature>
<feature type="binding site" evidence="1">
    <location>
        <begin position="8"/>
        <end position="15"/>
    </location>
    <ligand>
        <name>substrate</name>
    </ligand>
</feature>
<feature type="binding site" evidence="1">
    <location>
        <begin position="21"/>
        <end position="22"/>
    </location>
    <ligand>
        <name>substrate</name>
    </ligand>
</feature>
<feature type="binding site" evidence="1">
    <location>
        <position position="58"/>
    </location>
    <ligand>
        <name>substrate</name>
    </ligand>
</feature>
<feature type="binding site" evidence="1">
    <location>
        <position position="60"/>
    </location>
    <ligand>
        <name>substrate</name>
    </ligand>
</feature>
<feature type="binding site" evidence="1">
    <location>
        <begin position="82"/>
        <end position="85"/>
    </location>
    <ligand>
        <name>substrate</name>
    </ligand>
</feature>
<feature type="binding site" evidence="1">
    <location>
        <begin position="104"/>
        <end position="105"/>
    </location>
    <ligand>
        <name>substrate</name>
    </ligand>
</feature>
<feature type="binding site" evidence="1">
    <location>
        <begin position="151"/>
        <end position="152"/>
    </location>
    <ligand>
        <name>substrate</name>
    </ligand>
</feature>
<feature type="site" description="Transition state stabilizer" evidence="1">
    <location>
        <position position="150"/>
    </location>
</feature>
<comment type="catalytic activity">
    <reaction evidence="1">
        <text>(2R)-2-phosphoglycerate = (2R)-3-phosphoglycerate</text>
        <dbReference type="Rhea" id="RHEA:15901"/>
        <dbReference type="ChEBI" id="CHEBI:58272"/>
        <dbReference type="ChEBI" id="CHEBI:58289"/>
    </reaction>
</comment>
<comment type="pathway">
    <text evidence="1">Carbohydrate degradation; glycolysis; pyruvate from D-glyceraldehyde 3-phosphate: step 3/5.</text>
</comment>
<comment type="similarity">
    <text evidence="1">Belongs to the phosphoglycerate mutase family. GpmB subfamily.</text>
</comment>
<proteinExistence type="inferred from homology"/>
<reference key="1">
    <citation type="journal article" date="2002" name="Nucleic Acids Res.">
        <title>Genome sequence of Shigella flexneri 2a: insights into pathogenicity through comparison with genomes of Escherichia coli K12 and O157.</title>
        <authorList>
            <person name="Jin Q."/>
            <person name="Yuan Z."/>
            <person name="Xu J."/>
            <person name="Wang Y."/>
            <person name="Shen Y."/>
            <person name="Lu W."/>
            <person name="Wang J."/>
            <person name="Liu H."/>
            <person name="Yang J."/>
            <person name="Yang F."/>
            <person name="Zhang X."/>
            <person name="Zhang J."/>
            <person name="Yang G."/>
            <person name="Wu H."/>
            <person name="Qu D."/>
            <person name="Dong J."/>
            <person name="Sun L."/>
            <person name="Xue Y."/>
            <person name="Zhao A."/>
            <person name="Gao Y."/>
            <person name="Zhu J."/>
            <person name="Kan B."/>
            <person name="Ding K."/>
            <person name="Chen S."/>
            <person name="Cheng H."/>
            <person name="Yao Z."/>
            <person name="He B."/>
            <person name="Chen R."/>
            <person name="Ma D."/>
            <person name="Qiang B."/>
            <person name="Wen Y."/>
            <person name="Hou Y."/>
            <person name="Yu J."/>
        </authorList>
    </citation>
    <scope>NUCLEOTIDE SEQUENCE [LARGE SCALE GENOMIC DNA]</scope>
    <source>
        <strain>301 / Serotype 2a</strain>
    </source>
</reference>
<reference key="2">
    <citation type="journal article" date="2003" name="Infect. Immun.">
        <title>Complete genome sequence and comparative genomics of Shigella flexneri serotype 2a strain 2457T.</title>
        <authorList>
            <person name="Wei J."/>
            <person name="Goldberg M.B."/>
            <person name="Burland V."/>
            <person name="Venkatesan M.M."/>
            <person name="Deng W."/>
            <person name="Fournier G."/>
            <person name="Mayhew G.F."/>
            <person name="Plunkett G. III"/>
            <person name="Rose D.J."/>
            <person name="Darling A."/>
            <person name="Mau B."/>
            <person name="Perna N.T."/>
            <person name="Payne S.M."/>
            <person name="Runyen-Janecky L.J."/>
            <person name="Zhou S."/>
            <person name="Schwartz D.C."/>
            <person name="Blattner F.R."/>
        </authorList>
    </citation>
    <scope>NUCLEOTIDE SEQUENCE [LARGE SCALE GENOMIC DNA]</scope>
    <source>
        <strain>ATCC 700930 / 2457T / Serotype 2a</strain>
    </source>
</reference>
<name>GPMB_SHIFL</name>
<organism>
    <name type="scientific">Shigella flexneri</name>
    <dbReference type="NCBI Taxonomy" id="623"/>
    <lineage>
        <taxon>Bacteria</taxon>
        <taxon>Pseudomonadati</taxon>
        <taxon>Pseudomonadota</taxon>
        <taxon>Gammaproteobacteria</taxon>
        <taxon>Enterobacterales</taxon>
        <taxon>Enterobacteriaceae</taxon>
        <taxon>Shigella</taxon>
    </lineage>
</organism>
<keyword id="KW-0324">Glycolysis</keyword>
<keyword id="KW-0413">Isomerase</keyword>
<keyword id="KW-1185">Reference proteome</keyword>